<feature type="chain" id="PRO_1000202095" description="Ribosome-recycling factor">
    <location>
        <begin position="1"/>
        <end position="184"/>
    </location>
</feature>
<feature type="region of interest" description="Disordered" evidence="2">
    <location>
        <begin position="141"/>
        <end position="161"/>
    </location>
</feature>
<sequence length="184" mass="20867">MQTVLKDAEDRMKKALAALDKEFSRLRTGRATTSLLDGVRVDYYGTATQLDQLASVATPDSRTITIQPWDRKAFADIEKAILKSGLGLTPVNDGKIIRISIPPLTEDRRKDLVKVAKKYVEEAKVAMRNVRRDANELLKKKKNDKAISEDDQRKGQDDVQKLTDNYIVKTDEAFSKKEKEIMEI</sequence>
<reference key="1">
    <citation type="journal article" date="2009" name="Genome Res.">
        <title>Whole genome sequence of Desulfovibrio magneticus strain RS-1 revealed common gene clusters in magnetotactic bacteria.</title>
        <authorList>
            <person name="Nakazawa H."/>
            <person name="Arakaki A."/>
            <person name="Narita-Yamada S."/>
            <person name="Yashiro I."/>
            <person name="Jinno K."/>
            <person name="Aoki N."/>
            <person name="Tsuruyama A."/>
            <person name="Okamura Y."/>
            <person name="Tanikawa S."/>
            <person name="Fujita N."/>
            <person name="Takeyama H."/>
            <person name="Matsunaga T."/>
        </authorList>
    </citation>
    <scope>NUCLEOTIDE SEQUENCE [LARGE SCALE GENOMIC DNA]</scope>
    <source>
        <strain>ATCC 700980 / DSM 13731 / RS-1</strain>
    </source>
</reference>
<evidence type="ECO:0000255" key="1">
    <source>
        <dbReference type="HAMAP-Rule" id="MF_00040"/>
    </source>
</evidence>
<evidence type="ECO:0000256" key="2">
    <source>
        <dbReference type="SAM" id="MobiDB-lite"/>
    </source>
</evidence>
<dbReference type="EMBL" id="AP010904">
    <property type="protein sequence ID" value="BAH77282.1"/>
    <property type="molecule type" value="Genomic_DNA"/>
</dbReference>
<dbReference type="RefSeq" id="WP_015862423.1">
    <property type="nucleotide sequence ID" value="NC_012796.1"/>
</dbReference>
<dbReference type="SMR" id="C4XMX9"/>
<dbReference type="STRING" id="573370.DMR_37910"/>
<dbReference type="KEGG" id="dma:DMR_37910"/>
<dbReference type="eggNOG" id="COG0233">
    <property type="taxonomic scope" value="Bacteria"/>
</dbReference>
<dbReference type="HOGENOM" id="CLU_073981_2_0_7"/>
<dbReference type="OrthoDB" id="9804006at2"/>
<dbReference type="Proteomes" id="UP000009071">
    <property type="component" value="Chromosome"/>
</dbReference>
<dbReference type="GO" id="GO:0005829">
    <property type="term" value="C:cytosol"/>
    <property type="evidence" value="ECO:0007669"/>
    <property type="project" value="GOC"/>
</dbReference>
<dbReference type="GO" id="GO:0043023">
    <property type="term" value="F:ribosomal large subunit binding"/>
    <property type="evidence" value="ECO:0007669"/>
    <property type="project" value="TreeGrafter"/>
</dbReference>
<dbReference type="GO" id="GO:0002184">
    <property type="term" value="P:cytoplasmic translational termination"/>
    <property type="evidence" value="ECO:0007669"/>
    <property type="project" value="TreeGrafter"/>
</dbReference>
<dbReference type="CDD" id="cd00520">
    <property type="entry name" value="RRF"/>
    <property type="match status" value="1"/>
</dbReference>
<dbReference type="FunFam" id="1.10.132.20:FF:000001">
    <property type="entry name" value="Ribosome-recycling factor"/>
    <property type="match status" value="1"/>
</dbReference>
<dbReference type="FunFam" id="3.30.1360.40:FF:000001">
    <property type="entry name" value="Ribosome-recycling factor"/>
    <property type="match status" value="1"/>
</dbReference>
<dbReference type="Gene3D" id="3.30.1360.40">
    <property type="match status" value="1"/>
</dbReference>
<dbReference type="Gene3D" id="1.10.132.20">
    <property type="entry name" value="Ribosome-recycling factor"/>
    <property type="match status" value="1"/>
</dbReference>
<dbReference type="HAMAP" id="MF_00040">
    <property type="entry name" value="RRF"/>
    <property type="match status" value="1"/>
</dbReference>
<dbReference type="InterPro" id="IPR002661">
    <property type="entry name" value="Ribosome_recyc_fac"/>
</dbReference>
<dbReference type="InterPro" id="IPR023584">
    <property type="entry name" value="Ribosome_recyc_fac_dom"/>
</dbReference>
<dbReference type="InterPro" id="IPR036191">
    <property type="entry name" value="RRF_sf"/>
</dbReference>
<dbReference type="NCBIfam" id="TIGR00496">
    <property type="entry name" value="frr"/>
    <property type="match status" value="1"/>
</dbReference>
<dbReference type="PANTHER" id="PTHR20982:SF3">
    <property type="entry name" value="MITOCHONDRIAL RIBOSOME RECYCLING FACTOR PSEUDO 1"/>
    <property type="match status" value="1"/>
</dbReference>
<dbReference type="PANTHER" id="PTHR20982">
    <property type="entry name" value="RIBOSOME RECYCLING FACTOR"/>
    <property type="match status" value="1"/>
</dbReference>
<dbReference type="Pfam" id="PF01765">
    <property type="entry name" value="RRF"/>
    <property type="match status" value="1"/>
</dbReference>
<dbReference type="SUPFAM" id="SSF55194">
    <property type="entry name" value="Ribosome recycling factor, RRF"/>
    <property type="match status" value="1"/>
</dbReference>
<proteinExistence type="inferred from homology"/>
<keyword id="KW-0963">Cytoplasm</keyword>
<keyword id="KW-0648">Protein biosynthesis</keyword>
<name>RRF_SOLM1</name>
<comment type="function">
    <text evidence="1">Responsible for the release of ribosomes from messenger RNA at the termination of protein biosynthesis. May increase the efficiency of translation by recycling ribosomes from one round of translation to another.</text>
</comment>
<comment type="subcellular location">
    <subcellularLocation>
        <location evidence="1">Cytoplasm</location>
    </subcellularLocation>
</comment>
<comment type="similarity">
    <text evidence="1">Belongs to the RRF family.</text>
</comment>
<organism>
    <name type="scientific">Solidesulfovibrio magneticus (strain ATCC 700980 / DSM 13731 / RS-1)</name>
    <name type="common">Desulfovibrio magneticus</name>
    <dbReference type="NCBI Taxonomy" id="573370"/>
    <lineage>
        <taxon>Bacteria</taxon>
        <taxon>Pseudomonadati</taxon>
        <taxon>Thermodesulfobacteriota</taxon>
        <taxon>Desulfovibrionia</taxon>
        <taxon>Desulfovibrionales</taxon>
        <taxon>Desulfovibrionaceae</taxon>
        <taxon>Solidesulfovibrio</taxon>
    </lineage>
</organism>
<gene>
    <name evidence="1" type="primary">frr</name>
    <name type="ordered locus">DMR_37910</name>
</gene>
<accession>C4XMX9</accession>
<protein>
    <recommendedName>
        <fullName evidence="1">Ribosome-recycling factor</fullName>
        <shortName evidence="1">RRF</shortName>
    </recommendedName>
    <alternativeName>
        <fullName evidence="1">Ribosome-releasing factor</fullName>
    </alternativeName>
</protein>